<name>Y064_MYCVP</name>
<reference key="1">
    <citation type="submission" date="2006-12" db="EMBL/GenBank/DDBJ databases">
        <title>Complete sequence of Mycobacterium vanbaalenii PYR-1.</title>
        <authorList>
            <consortium name="US DOE Joint Genome Institute"/>
            <person name="Copeland A."/>
            <person name="Lucas S."/>
            <person name="Lapidus A."/>
            <person name="Barry K."/>
            <person name="Detter J.C."/>
            <person name="Glavina del Rio T."/>
            <person name="Hammon N."/>
            <person name="Israni S."/>
            <person name="Dalin E."/>
            <person name="Tice H."/>
            <person name="Pitluck S."/>
            <person name="Singan V."/>
            <person name="Schmutz J."/>
            <person name="Larimer F."/>
            <person name="Land M."/>
            <person name="Hauser L."/>
            <person name="Kyrpides N."/>
            <person name="Anderson I.J."/>
            <person name="Miller C."/>
            <person name="Richardson P."/>
        </authorList>
    </citation>
    <scope>NUCLEOTIDE SEQUENCE [LARGE SCALE GENOMIC DNA]</scope>
    <source>
        <strain>DSM 7251 / JCM 13017 / BCRC 16820 / KCTC 9966 / NRRL B-24157 / PYR-1</strain>
    </source>
</reference>
<evidence type="ECO:0000255" key="1">
    <source>
        <dbReference type="HAMAP-Rule" id="MF_00771"/>
    </source>
</evidence>
<dbReference type="EMBL" id="CP000511">
    <property type="protein sequence ID" value="ABM10915.1"/>
    <property type="molecule type" value="Genomic_DNA"/>
</dbReference>
<dbReference type="RefSeq" id="WP_011777389.1">
    <property type="nucleotide sequence ID" value="NZ_JACKSD010000086.1"/>
</dbReference>
<dbReference type="SMR" id="A1T165"/>
<dbReference type="STRING" id="350058.Mvan_0064"/>
<dbReference type="KEGG" id="mva:Mvan_0064"/>
<dbReference type="eggNOG" id="COG1673">
    <property type="taxonomic scope" value="Bacteria"/>
</dbReference>
<dbReference type="HOGENOM" id="CLU_117727_0_0_11"/>
<dbReference type="Proteomes" id="UP000009159">
    <property type="component" value="Chromosome"/>
</dbReference>
<dbReference type="CDD" id="cd21132">
    <property type="entry name" value="EVE-like"/>
    <property type="match status" value="1"/>
</dbReference>
<dbReference type="Gene3D" id="3.10.590.10">
    <property type="entry name" value="ph1033 like domains"/>
    <property type="match status" value="1"/>
</dbReference>
<dbReference type="HAMAP" id="MF_00771">
    <property type="entry name" value="UPF0310"/>
    <property type="match status" value="1"/>
</dbReference>
<dbReference type="InterPro" id="IPR002740">
    <property type="entry name" value="EVE_domain"/>
</dbReference>
<dbReference type="InterPro" id="IPR015947">
    <property type="entry name" value="PUA-like_sf"/>
</dbReference>
<dbReference type="InterPro" id="IPR022996">
    <property type="entry name" value="UPF0310"/>
</dbReference>
<dbReference type="NCBIfam" id="NF002615">
    <property type="entry name" value="PRK02268.1-1"/>
    <property type="match status" value="1"/>
</dbReference>
<dbReference type="NCBIfam" id="NF002616">
    <property type="entry name" value="PRK02268.1-2"/>
    <property type="match status" value="1"/>
</dbReference>
<dbReference type="Pfam" id="PF01878">
    <property type="entry name" value="EVE"/>
    <property type="match status" value="1"/>
</dbReference>
<dbReference type="SUPFAM" id="SSF88697">
    <property type="entry name" value="PUA domain-like"/>
    <property type="match status" value="1"/>
</dbReference>
<accession>A1T165</accession>
<proteinExistence type="inferred from homology"/>
<comment type="similarity">
    <text evidence="1">Belongs to the UPF0310 family.</text>
</comment>
<feature type="chain" id="PRO_1000083577" description="UPF0310 protein Mvan_0064">
    <location>
        <begin position="1"/>
        <end position="145"/>
    </location>
</feature>
<protein>
    <recommendedName>
        <fullName evidence="1">UPF0310 protein Mvan_0064</fullName>
    </recommendedName>
</protein>
<sequence length="145" mass="16779">MTNWINTVSRDHVERGVRGRFTQANHGKPHMLRKMSRGDWIVFYSPKTAYPDGEPLQAFTAIGQVADDEPYQVEVAPDFQPWRRNVDFLDCAETPIRPLLDDLEFIEDKARWGYKFRFGVFRIDDHDLEVIRSAMVTPTAHIAGT</sequence>
<organism>
    <name type="scientific">Mycolicibacterium vanbaalenii (strain DSM 7251 / JCM 13017 / BCRC 16820 / KCTC 9966 / NRRL B-24157 / PYR-1)</name>
    <name type="common">Mycobacterium vanbaalenii</name>
    <dbReference type="NCBI Taxonomy" id="350058"/>
    <lineage>
        <taxon>Bacteria</taxon>
        <taxon>Bacillati</taxon>
        <taxon>Actinomycetota</taxon>
        <taxon>Actinomycetes</taxon>
        <taxon>Mycobacteriales</taxon>
        <taxon>Mycobacteriaceae</taxon>
        <taxon>Mycolicibacterium</taxon>
    </lineage>
</organism>
<gene>
    <name type="ordered locus">Mvan_0064</name>
</gene>